<name>MED17_DROME</name>
<evidence type="ECO:0000256" key="1">
    <source>
        <dbReference type="SAM" id="MobiDB-lite"/>
    </source>
</evidence>
<evidence type="ECO:0000269" key="2">
    <source>
    </source>
</evidence>
<evidence type="ECO:0000269" key="3">
    <source>
    </source>
</evidence>
<evidence type="ECO:0000269" key="4">
    <source>
    </source>
</evidence>
<evidence type="ECO:0000269" key="5">
    <source>
    </source>
</evidence>
<evidence type="ECO:0000269" key="6">
    <source>
    </source>
</evidence>
<evidence type="ECO:0000305" key="7"/>
<gene>
    <name type="primary">MED17</name>
    <name type="synonym">Trap80</name>
    <name type="ORF">CG7957</name>
</gene>
<keyword id="KW-0010">Activator</keyword>
<keyword id="KW-0158">Chromosome</keyword>
<keyword id="KW-0217">Developmental protein</keyword>
<keyword id="KW-0539">Nucleus</keyword>
<keyword id="KW-1185">Reference proteome</keyword>
<keyword id="KW-0804">Transcription</keyword>
<keyword id="KW-0805">Transcription regulation</keyword>
<reference key="1">
    <citation type="journal article" date="2000" name="Genes Dev.">
        <title>Drosophila homologs of transcriptional mediator complex subunits are required for adult cell and segment identity specification.</title>
        <authorList>
            <person name="Boube M."/>
            <person name="Faucher C."/>
            <person name="Joulia L."/>
            <person name="Cribbs D.L."/>
            <person name="Bourbon H.-M."/>
        </authorList>
    </citation>
    <scope>NUCLEOTIDE SEQUENCE [MRNA]</scope>
    <scope>FUNCTION</scope>
    <scope>DEVELOPMENTAL STAGE</scope>
</reference>
<reference key="2">
    <citation type="submission" date="2000-07" db="EMBL/GenBank/DDBJ databases">
        <title>Transcriptional coactivators in Drosophila.</title>
        <authorList>
            <person name="Southworth J.W."/>
            <person name="Kennison J.A."/>
        </authorList>
    </citation>
    <scope>NUCLEOTIDE SEQUENCE [MRNA]</scope>
</reference>
<reference key="3">
    <citation type="journal article" date="2000" name="Science">
        <title>The genome sequence of Drosophila melanogaster.</title>
        <authorList>
            <person name="Adams M.D."/>
            <person name="Celniker S.E."/>
            <person name="Holt R.A."/>
            <person name="Evans C.A."/>
            <person name="Gocayne J.D."/>
            <person name="Amanatides P.G."/>
            <person name="Scherer S.E."/>
            <person name="Li P.W."/>
            <person name="Hoskins R.A."/>
            <person name="Galle R.F."/>
            <person name="George R.A."/>
            <person name="Lewis S.E."/>
            <person name="Richards S."/>
            <person name="Ashburner M."/>
            <person name="Henderson S.N."/>
            <person name="Sutton G.G."/>
            <person name="Wortman J.R."/>
            <person name="Yandell M.D."/>
            <person name="Zhang Q."/>
            <person name="Chen L.X."/>
            <person name="Brandon R.C."/>
            <person name="Rogers Y.-H.C."/>
            <person name="Blazej R.G."/>
            <person name="Champe M."/>
            <person name="Pfeiffer B.D."/>
            <person name="Wan K.H."/>
            <person name="Doyle C."/>
            <person name="Baxter E.G."/>
            <person name="Helt G."/>
            <person name="Nelson C.R."/>
            <person name="Miklos G.L.G."/>
            <person name="Abril J.F."/>
            <person name="Agbayani A."/>
            <person name="An H.-J."/>
            <person name="Andrews-Pfannkoch C."/>
            <person name="Baldwin D."/>
            <person name="Ballew R.M."/>
            <person name="Basu A."/>
            <person name="Baxendale J."/>
            <person name="Bayraktaroglu L."/>
            <person name="Beasley E.M."/>
            <person name="Beeson K.Y."/>
            <person name="Benos P.V."/>
            <person name="Berman B.P."/>
            <person name="Bhandari D."/>
            <person name="Bolshakov S."/>
            <person name="Borkova D."/>
            <person name="Botchan M.R."/>
            <person name="Bouck J."/>
            <person name="Brokstein P."/>
            <person name="Brottier P."/>
            <person name="Burtis K.C."/>
            <person name="Busam D.A."/>
            <person name="Butler H."/>
            <person name="Cadieu E."/>
            <person name="Center A."/>
            <person name="Chandra I."/>
            <person name="Cherry J.M."/>
            <person name="Cawley S."/>
            <person name="Dahlke C."/>
            <person name="Davenport L.B."/>
            <person name="Davies P."/>
            <person name="de Pablos B."/>
            <person name="Delcher A."/>
            <person name="Deng Z."/>
            <person name="Mays A.D."/>
            <person name="Dew I."/>
            <person name="Dietz S.M."/>
            <person name="Dodson K."/>
            <person name="Doup L.E."/>
            <person name="Downes M."/>
            <person name="Dugan-Rocha S."/>
            <person name="Dunkov B.C."/>
            <person name="Dunn P."/>
            <person name="Durbin K.J."/>
            <person name="Evangelista C.C."/>
            <person name="Ferraz C."/>
            <person name="Ferriera S."/>
            <person name="Fleischmann W."/>
            <person name="Fosler C."/>
            <person name="Gabrielian A.E."/>
            <person name="Garg N.S."/>
            <person name="Gelbart W.M."/>
            <person name="Glasser K."/>
            <person name="Glodek A."/>
            <person name="Gong F."/>
            <person name="Gorrell J.H."/>
            <person name="Gu Z."/>
            <person name="Guan P."/>
            <person name="Harris M."/>
            <person name="Harris N.L."/>
            <person name="Harvey D.A."/>
            <person name="Heiman T.J."/>
            <person name="Hernandez J.R."/>
            <person name="Houck J."/>
            <person name="Hostin D."/>
            <person name="Houston K.A."/>
            <person name="Howland T.J."/>
            <person name="Wei M.-H."/>
            <person name="Ibegwam C."/>
            <person name="Jalali M."/>
            <person name="Kalush F."/>
            <person name="Karpen G.H."/>
            <person name="Ke Z."/>
            <person name="Kennison J.A."/>
            <person name="Ketchum K.A."/>
            <person name="Kimmel B.E."/>
            <person name="Kodira C.D."/>
            <person name="Kraft C.L."/>
            <person name="Kravitz S."/>
            <person name="Kulp D."/>
            <person name="Lai Z."/>
            <person name="Lasko P."/>
            <person name="Lei Y."/>
            <person name="Levitsky A.A."/>
            <person name="Li J.H."/>
            <person name="Li Z."/>
            <person name="Liang Y."/>
            <person name="Lin X."/>
            <person name="Liu X."/>
            <person name="Mattei B."/>
            <person name="McIntosh T.C."/>
            <person name="McLeod M.P."/>
            <person name="McPherson D."/>
            <person name="Merkulov G."/>
            <person name="Milshina N.V."/>
            <person name="Mobarry C."/>
            <person name="Morris J."/>
            <person name="Moshrefi A."/>
            <person name="Mount S.M."/>
            <person name="Moy M."/>
            <person name="Murphy B."/>
            <person name="Murphy L."/>
            <person name="Muzny D.M."/>
            <person name="Nelson D.L."/>
            <person name="Nelson D.R."/>
            <person name="Nelson K.A."/>
            <person name="Nixon K."/>
            <person name="Nusskern D.R."/>
            <person name="Pacleb J.M."/>
            <person name="Palazzolo M."/>
            <person name="Pittman G.S."/>
            <person name="Pan S."/>
            <person name="Pollard J."/>
            <person name="Puri V."/>
            <person name="Reese M.G."/>
            <person name="Reinert K."/>
            <person name="Remington K."/>
            <person name="Saunders R.D.C."/>
            <person name="Scheeler F."/>
            <person name="Shen H."/>
            <person name="Shue B.C."/>
            <person name="Siden-Kiamos I."/>
            <person name="Simpson M."/>
            <person name="Skupski M.P."/>
            <person name="Smith T.J."/>
            <person name="Spier E."/>
            <person name="Spradling A.C."/>
            <person name="Stapleton M."/>
            <person name="Strong R."/>
            <person name="Sun E."/>
            <person name="Svirskas R."/>
            <person name="Tector C."/>
            <person name="Turner R."/>
            <person name="Venter E."/>
            <person name="Wang A.H."/>
            <person name="Wang X."/>
            <person name="Wang Z.-Y."/>
            <person name="Wassarman D.A."/>
            <person name="Weinstock G.M."/>
            <person name="Weissenbach J."/>
            <person name="Williams S.M."/>
            <person name="Woodage T."/>
            <person name="Worley K.C."/>
            <person name="Wu D."/>
            <person name="Yang S."/>
            <person name="Yao Q.A."/>
            <person name="Ye J."/>
            <person name="Yeh R.-F."/>
            <person name="Zaveri J.S."/>
            <person name="Zhan M."/>
            <person name="Zhang G."/>
            <person name="Zhao Q."/>
            <person name="Zheng L."/>
            <person name="Zheng X.H."/>
            <person name="Zhong F.N."/>
            <person name="Zhong W."/>
            <person name="Zhou X."/>
            <person name="Zhu S.C."/>
            <person name="Zhu X."/>
            <person name="Smith H.O."/>
            <person name="Gibbs R.A."/>
            <person name="Myers E.W."/>
            <person name="Rubin G.M."/>
            <person name="Venter J.C."/>
        </authorList>
    </citation>
    <scope>NUCLEOTIDE SEQUENCE [LARGE SCALE GENOMIC DNA]</scope>
    <source>
        <strain>Berkeley</strain>
    </source>
</reference>
<reference key="4">
    <citation type="journal article" date="2002" name="Genome Biol.">
        <title>Annotation of the Drosophila melanogaster euchromatic genome: a systematic review.</title>
        <authorList>
            <person name="Misra S."/>
            <person name="Crosby M.A."/>
            <person name="Mungall C.J."/>
            <person name="Matthews B.B."/>
            <person name="Campbell K.S."/>
            <person name="Hradecky P."/>
            <person name="Huang Y."/>
            <person name="Kaminker J.S."/>
            <person name="Millburn G.H."/>
            <person name="Prochnik S.E."/>
            <person name="Smith C.D."/>
            <person name="Tupy J.L."/>
            <person name="Whitfield E.J."/>
            <person name="Bayraktaroglu L."/>
            <person name="Berman B.P."/>
            <person name="Bettencourt B.R."/>
            <person name="Celniker S.E."/>
            <person name="de Grey A.D.N.J."/>
            <person name="Drysdale R.A."/>
            <person name="Harris N.L."/>
            <person name="Richter J."/>
            <person name="Russo S."/>
            <person name="Schroeder A.J."/>
            <person name="Shu S.Q."/>
            <person name="Stapleton M."/>
            <person name="Yamada C."/>
            <person name="Ashburner M."/>
            <person name="Gelbart W.M."/>
            <person name="Rubin G.M."/>
            <person name="Lewis S.E."/>
        </authorList>
    </citation>
    <scope>GENOME REANNOTATION</scope>
    <source>
        <strain>Berkeley</strain>
    </source>
</reference>
<reference key="5">
    <citation type="journal article" date="2002" name="Genome Biol.">
        <title>A Drosophila full-length cDNA resource.</title>
        <authorList>
            <person name="Stapleton M."/>
            <person name="Carlson J.W."/>
            <person name="Brokstein P."/>
            <person name="Yu C."/>
            <person name="Champe M."/>
            <person name="George R.A."/>
            <person name="Guarin H."/>
            <person name="Kronmiller B."/>
            <person name="Pacleb J.M."/>
            <person name="Park S."/>
            <person name="Wan K.H."/>
            <person name="Rubin G.M."/>
            <person name="Celniker S.E."/>
        </authorList>
    </citation>
    <scope>NUCLEOTIDE SEQUENCE [LARGE SCALE MRNA]</scope>
    <source>
        <strain>Berkeley</strain>
        <tissue>Embryo</tissue>
    </source>
</reference>
<reference key="6">
    <citation type="journal article" date="2001" name="Mol. Cell">
        <title>Mediator, not holoenzyme, is directly recruited to the heat shock promoter by HSF upon heat shock.</title>
        <authorList>
            <person name="Park J.M."/>
            <person name="Werner J."/>
            <person name="Kim J.M."/>
            <person name="Lis J.T."/>
            <person name="Kim Y.-J."/>
        </authorList>
    </citation>
    <scope>INTERACTION WITH HSF</scope>
    <scope>SUBCELLULAR LOCATION</scope>
</reference>
<reference key="7">
    <citation type="journal article" date="2001" name="Mol. Cell. Biol.">
        <title>Drosophila Mediator complex is broadly utilized by diverse gene-specific transcription factors at different types of core promoters.</title>
        <authorList>
            <person name="Park J.M."/>
            <person name="Gim B.S."/>
            <person name="Kim J.M."/>
            <person name="Yoon J.H."/>
            <person name="Kim H.-S."/>
            <person name="Kang J.-G."/>
            <person name="Kim Y.-J."/>
        </authorList>
    </citation>
    <scope>IDENTIFICATION BY MASS SPECTROMETRY</scope>
    <scope>FUNCTION OF THE MEDIATOR COMPLEX</scope>
    <scope>IDENTIFICATION IN A COMPLEX WITH CDK8; MED4; MED6; MED14; MED18; MED20; MED21 AND MED31</scope>
    <scope>DEVELOPMENTAL STAGE</scope>
</reference>
<reference key="8">
    <citation type="journal article" date="2002" name="J. Biol. Chem.">
        <title>Novel Mediator proteins of the small Mediator complex in Drosophila SL2 cells.</title>
        <authorList>
            <person name="Gu J.-Y."/>
            <person name="Park J.M."/>
            <person name="Song E.J."/>
            <person name="Mizuguchi G."/>
            <person name="Yoon J.H."/>
            <person name="Kim-Ha J."/>
            <person name="Lee K.-J."/>
            <person name="Kim Y.-J."/>
        </authorList>
    </citation>
    <scope>IDENTIFICATION BY MASS SPECTROMETRY</scope>
    <scope>IDENTIFICATION IN THE MEDIATOR COMPLEX</scope>
    <scope>FUNCTION OF THE MEDIATOR COMPLEX</scope>
</reference>
<reference key="9">
    <citation type="journal article" date="2006" name="Genes Dev.">
        <title>Coactivator cross-talk specifies transcriptional output.</title>
        <authorList>
            <person name="Marr M.T. II"/>
            <person name="Isogai Y."/>
            <person name="Wright K.J."/>
            <person name="Tjian R."/>
        </authorList>
    </citation>
    <scope>FUNCTION</scope>
</reference>
<protein>
    <recommendedName>
        <fullName>Mediator of RNA polymerase II transcription subunit 17</fullName>
    </recommendedName>
    <alternativeName>
        <fullName>Mediator complex subunit 17</fullName>
    </alternativeName>
    <alternativeName>
        <fullName>dMED17</fullName>
    </alternativeName>
    <alternativeName>
        <fullName>dTRAP80</fullName>
    </alternativeName>
</protein>
<proteinExistence type="evidence at protein level"/>
<sequence length="642" mass="71557">MSNSVNISVETTCENQIREIGYDGTELYQPPPTLSESLAKCAARIDFSKTSLDDLKKEEKSAAAAADEDKDATQFQESLWPWDAVRNKLKDALTEICVLSDVISIAKDKRYLVLDPLLEEADDTKPIVQVYSRKKAISQAAQVLLSGAERLRNAHSEQRNRNVSDFHIELLRLRQNWRLKKVSNAIIGDLSYRTAGSKFGMSGTFEVTKAEETGDEDTASSSNSSSSVSGNNGMQLKASSALRVIVPAELQGVAYIKVITQKDQEDLCTAQLNLMGHGPNITAQVGVWQKTLEFAQNVLFCKELFAQLAREAIQLQAPIPHVVIGNQIRATLLPNIQLIISLCHSTTFDSSQPAPINDHDHVLEHSLHQLLREVHYKNSHHPFPHPASAPLGPTKKRMLAGPMAADRETLLDMTKSQTILEQIIAQAQHIFMRKRTQYVLDTLARDVKDPQIVSHWNAMNSPTMSCVKINIVTHGYDAIGRTSLVIHVKERSLKCICRDGRVMRLSYEPQELRDLILCQINSHQISCLISLARCMSWTVLSNSNHLGIGKVEPLGNASSCLLASPNSDRMIAVQIRCDPQIDVKVYIARSPRQDFFPSPLVPEKLWENLGGTFKEVRFDKIEGKSFLNKMEFLMASLTSNTA</sequence>
<accession>Q9VEC1</accession>
<comment type="function">
    <text evidence="2 3 5 6">Component of the Mediator complex, a coactivator involved in the regulated transcription of nearly all RNA polymerase II-dependent genes. Mediator functions as a bridge to convey information from gene-specific regulatory proteins to the basal RNA polymerase II transcription machinery. Mediator is recruited to promoters by direct interactions with regulatory proteins and serves as a scaffold for the assembly of a functional preinitiation complex with RNA polymerase II and the general transcription factors. Required for activated transcription of the MtnA, MtnB and MtnD genes. Negatively regulates sex comb development.</text>
</comment>
<comment type="subunit">
    <text evidence="3 4 5">Component of the Mediator complex, which includes at least CDK8, MED4, MED6, MED11, MED14, MED17, MED18, MED20, MED21, MED22, MED27, MED28, MED30 and MED31. Interacts with Hsf.</text>
</comment>
<comment type="interaction">
    <interactant intactId="EBI-135284">
        <id>Q9VEC1</id>
    </interactant>
    <interactant intactId="EBI-175591">
        <id>P91641</id>
        <label>MED20</label>
    </interactant>
    <organismsDiffer>false</organismsDiffer>
    <experiments>7</experiments>
</comment>
<comment type="interaction">
    <interactant intactId="EBI-135284">
        <id>Q9VEC1</id>
    </interactant>
    <interactant intactId="EBI-194467">
        <id>Q8MSX2</id>
        <label>MED6</label>
    </interactant>
    <organismsDiffer>false</organismsDiffer>
    <experiments>7</experiments>
</comment>
<comment type="subcellular location">
    <subcellularLocation>
        <location evidence="4">Nucleus</location>
    </subcellularLocation>
    <subcellularLocation>
        <location evidence="4">Chromosome</location>
    </subcellularLocation>
    <text>Colocalizes with RNA polymerase II on pachytene chromosomes.</text>
</comment>
<comment type="developmental stage">
    <text evidence="2 3">Maternally encoded. Expression decreases during larval stages then rises during mid-pupal metamorphosis.</text>
</comment>
<comment type="similarity">
    <text evidence="7">Belongs to the Mediator complex subunit 17 family.</text>
</comment>
<feature type="chain" id="PRO_0000304706" description="Mediator of RNA polymerase II transcription subunit 17">
    <location>
        <begin position="1"/>
        <end position="642"/>
    </location>
</feature>
<feature type="region of interest" description="Disordered" evidence="1">
    <location>
        <begin position="210"/>
        <end position="232"/>
    </location>
</feature>
<feature type="compositionally biased region" description="Low complexity" evidence="1">
    <location>
        <begin position="220"/>
        <end position="232"/>
    </location>
</feature>
<organism>
    <name type="scientific">Drosophila melanogaster</name>
    <name type="common">Fruit fly</name>
    <dbReference type="NCBI Taxonomy" id="7227"/>
    <lineage>
        <taxon>Eukaryota</taxon>
        <taxon>Metazoa</taxon>
        <taxon>Ecdysozoa</taxon>
        <taxon>Arthropoda</taxon>
        <taxon>Hexapoda</taxon>
        <taxon>Insecta</taxon>
        <taxon>Pterygota</taxon>
        <taxon>Neoptera</taxon>
        <taxon>Endopterygota</taxon>
        <taxon>Diptera</taxon>
        <taxon>Brachycera</taxon>
        <taxon>Muscomorpha</taxon>
        <taxon>Ephydroidea</taxon>
        <taxon>Drosophilidae</taxon>
        <taxon>Drosophila</taxon>
        <taxon>Sophophora</taxon>
    </lineage>
</organism>
<dbReference type="EMBL" id="AF244916">
    <property type="protein sequence ID" value="AAF63336.1"/>
    <property type="molecule type" value="mRNA"/>
</dbReference>
<dbReference type="EMBL" id="AF289995">
    <property type="protein sequence ID" value="AAG02460.1"/>
    <property type="molecule type" value="mRNA"/>
</dbReference>
<dbReference type="EMBL" id="AE014297">
    <property type="protein sequence ID" value="AAF55506.1"/>
    <property type="molecule type" value="Genomic_DNA"/>
</dbReference>
<dbReference type="EMBL" id="AY118662">
    <property type="protein sequence ID" value="AAM50031.1"/>
    <property type="molecule type" value="mRNA"/>
</dbReference>
<dbReference type="RefSeq" id="NP_650686.1">
    <property type="nucleotide sequence ID" value="NM_142429.3"/>
</dbReference>
<dbReference type="SMR" id="Q9VEC1"/>
<dbReference type="BioGRID" id="67196">
    <property type="interactions" value="56"/>
</dbReference>
<dbReference type="ComplexPortal" id="CPX-2308">
    <property type="entry name" value="Core mediator complex"/>
</dbReference>
<dbReference type="DIP" id="DIP-20967N"/>
<dbReference type="FunCoup" id="Q9VEC1">
    <property type="interactions" value="1929"/>
</dbReference>
<dbReference type="IntAct" id="Q9VEC1">
    <property type="interactions" value="65"/>
</dbReference>
<dbReference type="STRING" id="7227.FBpp0082980"/>
<dbReference type="PaxDb" id="7227-FBpp0082980"/>
<dbReference type="DNASU" id="42175"/>
<dbReference type="EnsemblMetazoa" id="FBtr0083558">
    <property type="protein sequence ID" value="FBpp0082980"/>
    <property type="gene ID" value="FBgn0038578"/>
</dbReference>
<dbReference type="GeneID" id="42175"/>
<dbReference type="KEGG" id="dme:Dmel_CG7957"/>
<dbReference type="AGR" id="FB:FBgn0038578"/>
<dbReference type="CTD" id="9440"/>
<dbReference type="FlyBase" id="FBgn0038578">
    <property type="gene designation" value="MED17"/>
</dbReference>
<dbReference type="VEuPathDB" id="VectorBase:FBgn0038578"/>
<dbReference type="eggNOG" id="KOG4512">
    <property type="taxonomic scope" value="Eukaryota"/>
</dbReference>
<dbReference type="GeneTree" id="ENSGT00390000011810"/>
<dbReference type="HOGENOM" id="CLU_028003_1_0_1"/>
<dbReference type="InParanoid" id="Q9VEC1"/>
<dbReference type="OMA" id="HMSYEPQ"/>
<dbReference type="OrthoDB" id="10058398at2759"/>
<dbReference type="PhylomeDB" id="Q9VEC1"/>
<dbReference type="Reactome" id="R-DME-9841922">
    <property type="pathway name" value="MLL4 and MLL3 complexes regulate expression of PPARG target genes in adipogenesis and hepatic steatosis"/>
</dbReference>
<dbReference type="SignaLink" id="Q9VEC1"/>
<dbReference type="BioGRID-ORCS" id="42175">
    <property type="hits" value="0 hits in 1 CRISPR screen"/>
</dbReference>
<dbReference type="GenomeRNAi" id="42175"/>
<dbReference type="PRO" id="PR:Q9VEC1"/>
<dbReference type="Proteomes" id="UP000000803">
    <property type="component" value="Chromosome 3R"/>
</dbReference>
<dbReference type="Bgee" id="FBgn0038578">
    <property type="expression patterns" value="Expressed in T neuron T5d (Drosophila) in embryonic/larval optic lobe (Drosophila) and 61 other cell types or tissues"/>
</dbReference>
<dbReference type="GO" id="GO:0070847">
    <property type="term" value="C:core mediator complex"/>
    <property type="evidence" value="ECO:0000318"/>
    <property type="project" value="GO_Central"/>
</dbReference>
<dbReference type="GO" id="GO:0016592">
    <property type="term" value="C:mediator complex"/>
    <property type="evidence" value="ECO:0000314"/>
    <property type="project" value="UniProtKB"/>
</dbReference>
<dbReference type="GO" id="GO:0005634">
    <property type="term" value="C:nucleus"/>
    <property type="evidence" value="ECO:0000314"/>
    <property type="project" value="FlyBase"/>
</dbReference>
<dbReference type="GO" id="GO:0005721">
    <property type="term" value="C:pericentric heterochromatin"/>
    <property type="evidence" value="ECO:0000353"/>
    <property type="project" value="FlyBase"/>
</dbReference>
<dbReference type="GO" id="GO:0140297">
    <property type="term" value="F:DNA-binding transcription factor binding"/>
    <property type="evidence" value="ECO:0000353"/>
    <property type="project" value="FlyBase"/>
</dbReference>
<dbReference type="GO" id="GO:0003712">
    <property type="term" value="F:transcription coregulator activity"/>
    <property type="evidence" value="ECO:0000315"/>
    <property type="project" value="UniProtKB"/>
</dbReference>
<dbReference type="GO" id="GO:0045944">
    <property type="term" value="P:positive regulation of transcription by RNA polymerase II"/>
    <property type="evidence" value="ECO:0000315"/>
    <property type="project" value="FlyBase"/>
</dbReference>
<dbReference type="GO" id="GO:0006357">
    <property type="term" value="P:regulation of transcription by RNA polymerase II"/>
    <property type="evidence" value="ECO:0000314"/>
    <property type="project" value="FlyBase"/>
</dbReference>
<dbReference type="GO" id="GO:0060260">
    <property type="term" value="P:regulation of transcription initiation by RNA polymerase II"/>
    <property type="evidence" value="ECO:0000250"/>
    <property type="project" value="FlyBase"/>
</dbReference>
<dbReference type="GO" id="GO:0045498">
    <property type="term" value="P:sex comb development"/>
    <property type="evidence" value="ECO:0000316"/>
    <property type="project" value="FlyBase"/>
</dbReference>
<dbReference type="InterPro" id="IPR019313">
    <property type="entry name" value="Mediator_Med17"/>
</dbReference>
<dbReference type="PANTHER" id="PTHR13114">
    <property type="entry name" value="MEDIATOR OF RNA POLYMERASE II TRANSCRIPTION SUBUNIT 17"/>
    <property type="match status" value="1"/>
</dbReference>
<dbReference type="PANTHER" id="PTHR13114:SF7">
    <property type="entry name" value="MEDIATOR OF RNA POLYMERASE II TRANSCRIPTION SUBUNIT 17"/>
    <property type="match status" value="1"/>
</dbReference>